<reference key="1">
    <citation type="journal article" date="1988" name="J. Bacteriol.">
        <title>Nucleotide sequence analysis of a gene cloned from Leptospira biflexa serovar patoc which complements an argE defect in Escherichia coli.</title>
        <authorList>
            <person name="Zuerner R.L."/>
            <person name="Charon N.W."/>
        </authorList>
    </citation>
    <scope>NUCLEOTIDE SEQUENCE [GENOMIC DNA]</scope>
    <source>
        <strain>Patoc I / Serovar Patoc</strain>
    </source>
</reference>
<proteinExistence type="predicted"/>
<sequence>MNFSKLVVRKMPAHLQKLTVKSKTKVKSLKKNEYYTIIPETAEQEKVKVAIPIGKQIRVRQGDFVKRGDQLDEGNFDPHDILAIKGPNALHEYLVSEVQEVYRLQGVHINDKHIEVVVRSMLRKVIITDSGDTSFVNQQQVDKFLFDEENDRVEKEGGSPAQGTPVLLGLTKASLNTESYFSAASFQETTKVLTDAAIKGKTDNLMGLKENVIIGHMIPAGTGMKKYRDIEVFKDLPGDLDWDLAIGGRGRRSFRTFRVGSCFHCHTLSTCCRRGRG</sequence>
<organism>
    <name type="scientific">Leptospira biflexa</name>
    <dbReference type="NCBI Taxonomy" id="172"/>
    <lineage>
        <taxon>Bacteria</taxon>
        <taxon>Pseudomonadati</taxon>
        <taxon>Spirochaetota</taxon>
        <taxon>Spirochaetia</taxon>
        <taxon>Leptospirales</taxon>
        <taxon>Leptospiraceae</taxon>
        <taxon>Leptospira</taxon>
    </lineage>
</organism>
<keyword id="KW-0028">Amino-acid biosynthesis</keyword>
<keyword id="KW-0055">Arginine biosynthesis</keyword>
<keyword id="KW-0378">Hydrolase</keyword>
<accession>P13440</accession>
<feature type="chain" id="PRO_0000064672" description="Putative acetylornithine deacetylase">
    <location>
        <begin position="1"/>
        <end position="277"/>
    </location>
</feature>
<protein>
    <recommendedName>
        <fullName>Putative acetylornithine deacetylase</fullName>
        <shortName>Acetylornithinase</shortName>
        <ecNumber>3.5.1.16</ecNumber>
    </recommendedName>
</protein>
<gene>
    <name type="primary">argE</name>
</gene>
<comment type="catalytic activity">
    <reaction>
        <text>N(2)-acetyl-L-ornithine + H2O = L-ornithine + acetate</text>
        <dbReference type="Rhea" id="RHEA:15941"/>
        <dbReference type="ChEBI" id="CHEBI:15377"/>
        <dbReference type="ChEBI" id="CHEBI:30089"/>
        <dbReference type="ChEBI" id="CHEBI:46911"/>
        <dbReference type="ChEBI" id="CHEBI:57805"/>
        <dbReference type="EC" id="3.5.1.16"/>
    </reaction>
</comment>
<comment type="pathway">
    <text>Amino-acid biosynthesis; L-arginine biosynthesis; L-ornithine from N(2)-acetyl-L-ornithine (linear): step 1/1.</text>
</comment>
<comment type="caution">
    <text evidence="1">Resembles portions of the beta' subunits of RNA polymerases from bacteria and chloroplasts. It was suggested that both the beta' subunit of RNA polymerases and L.biflexa ArgE-complementing activity possess N-acetylase or N-acetylornithinase activity. No homology with E.coli ArgE.</text>
</comment>
<dbReference type="EC" id="3.5.1.16"/>
<dbReference type="EMBL" id="M22622">
    <property type="protein sequence ID" value="AAA25260.1"/>
    <property type="molecule type" value="Genomic_DNA"/>
</dbReference>
<dbReference type="PIR" id="A31840">
    <property type="entry name" value="A31840"/>
</dbReference>
<dbReference type="SMR" id="P13440"/>
<dbReference type="UniPathway" id="UPA00068">
    <property type="reaction ID" value="UER00110"/>
</dbReference>
<dbReference type="GO" id="GO:0008777">
    <property type="term" value="F:acetylornithine deacetylase activity"/>
    <property type="evidence" value="ECO:0007669"/>
    <property type="project" value="UniProtKB-EC"/>
</dbReference>
<dbReference type="GO" id="GO:0003677">
    <property type="term" value="F:DNA binding"/>
    <property type="evidence" value="ECO:0007669"/>
    <property type="project" value="InterPro"/>
</dbReference>
<dbReference type="GO" id="GO:0003899">
    <property type="term" value="F:DNA-directed RNA polymerase activity"/>
    <property type="evidence" value="ECO:0007669"/>
    <property type="project" value="InterPro"/>
</dbReference>
<dbReference type="GO" id="GO:0006351">
    <property type="term" value="P:DNA-templated transcription"/>
    <property type="evidence" value="ECO:0007669"/>
    <property type="project" value="InterPro"/>
</dbReference>
<dbReference type="GO" id="GO:0006526">
    <property type="term" value="P:L-arginine biosynthetic process"/>
    <property type="evidence" value="ECO:0007669"/>
    <property type="project" value="UniProtKB-UniPathway"/>
</dbReference>
<dbReference type="CDD" id="cd02655">
    <property type="entry name" value="RNAP_beta'_C"/>
    <property type="match status" value="1"/>
</dbReference>
<dbReference type="FunFam" id="1.10.150.390:FF:000002">
    <property type="entry name" value="DNA-directed RNA polymerase subunit beta"/>
    <property type="match status" value="1"/>
</dbReference>
<dbReference type="Gene3D" id="1.10.150.390">
    <property type="match status" value="1"/>
</dbReference>
<dbReference type="Gene3D" id="1.10.1790.20">
    <property type="match status" value="1"/>
</dbReference>
<dbReference type="Gene3D" id="2.40.50.100">
    <property type="match status" value="1"/>
</dbReference>
<dbReference type="InterPro" id="IPR007081">
    <property type="entry name" value="RNA_pol_Rpb1_5"/>
</dbReference>
<dbReference type="PANTHER" id="PTHR48443">
    <property type="entry name" value="DNA-DIRECTED RNA POLYMERASE SUBUNIT BETA"/>
    <property type="match status" value="1"/>
</dbReference>
<dbReference type="PANTHER" id="PTHR48443:SF1">
    <property type="entry name" value="DNA-DIRECTED RNA POLYMERASE SUBUNIT BETA"/>
    <property type="match status" value="1"/>
</dbReference>
<dbReference type="Pfam" id="PF04998">
    <property type="entry name" value="RNA_pol_Rpb1_5"/>
    <property type="match status" value="1"/>
</dbReference>
<dbReference type="SUPFAM" id="SSF64484">
    <property type="entry name" value="beta and beta-prime subunits of DNA dependent RNA-polymerase"/>
    <property type="match status" value="1"/>
</dbReference>
<name>ARGE_LEPBI</name>
<evidence type="ECO:0000305" key="1"/>